<accession>P22837</accession>
<reference key="1">
    <citation type="journal article" date="1990" name="Gene">
        <title>Nucleotide sequence of a Proteus mirabilis DNA fragment homologous to the 60K-rnpA-rpmH-dnaA-dnaN-recF-gyrB region of Escherichia coli.</title>
        <authorList>
            <person name="Skovgaard O."/>
        </authorList>
    </citation>
    <scope>NUCLEOTIDE SEQUENCE [GENOMIC DNA]</scope>
    <source>
        <strain>LM1509</strain>
    </source>
</reference>
<name>DNAA_PROMI</name>
<dbReference type="EMBL" id="M58352">
    <property type="protein sequence ID" value="AAA83958.1"/>
    <property type="molecule type" value="Genomic_DNA"/>
</dbReference>
<dbReference type="PIR" id="JQ0733">
    <property type="entry name" value="IQEBV"/>
</dbReference>
<dbReference type="RefSeq" id="WP_004246507.1">
    <property type="nucleotide sequence ID" value="NZ_WNEI01000008.1"/>
</dbReference>
<dbReference type="SMR" id="P22837"/>
<dbReference type="STRING" id="584.AOUC001_18995"/>
<dbReference type="GeneID" id="6801995"/>
<dbReference type="OMA" id="DFIHFYQ"/>
<dbReference type="OrthoDB" id="9807019at2"/>
<dbReference type="GO" id="GO:0005737">
    <property type="term" value="C:cytoplasm"/>
    <property type="evidence" value="ECO:0007669"/>
    <property type="project" value="UniProtKB-SubCell"/>
</dbReference>
<dbReference type="GO" id="GO:0005886">
    <property type="term" value="C:plasma membrane"/>
    <property type="evidence" value="ECO:0007669"/>
    <property type="project" value="TreeGrafter"/>
</dbReference>
<dbReference type="GO" id="GO:0005524">
    <property type="term" value="F:ATP binding"/>
    <property type="evidence" value="ECO:0007669"/>
    <property type="project" value="UniProtKB-UniRule"/>
</dbReference>
<dbReference type="GO" id="GO:0016887">
    <property type="term" value="F:ATP hydrolysis activity"/>
    <property type="evidence" value="ECO:0007669"/>
    <property type="project" value="InterPro"/>
</dbReference>
<dbReference type="GO" id="GO:0003688">
    <property type="term" value="F:DNA replication origin binding"/>
    <property type="evidence" value="ECO:0007669"/>
    <property type="project" value="UniProtKB-UniRule"/>
</dbReference>
<dbReference type="GO" id="GO:0008289">
    <property type="term" value="F:lipid binding"/>
    <property type="evidence" value="ECO:0007669"/>
    <property type="project" value="UniProtKB-KW"/>
</dbReference>
<dbReference type="GO" id="GO:0006270">
    <property type="term" value="P:DNA replication initiation"/>
    <property type="evidence" value="ECO:0007669"/>
    <property type="project" value="UniProtKB-UniRule"/>
</dbReference>
<dbReference type="GO" id="GO:0006275">
    <property type="term" value="P:regulation of DNA replication"/>
    <property type="evidence" value="ECO:0007669"/>
    <property type="project" value="UniProtKB-UniRule"/>
</dbReference>
<dbReference type="CDD" id="cd00009">
    <property type="entry name" value="AAA"/>
    <property type="match status" value="1"/>
</dbReference>
<dbReference type="CDD" id="cd06571">
    <property type="entry name" value="Bac_DnaA_C"/>
    <property type="match status" value="1"/>
</dbReference>
<dbReference type="FunFam" id="1.10.1750.10:FF:000001">
    <property type="entry name" value="Chromosomal replication initiator protein DnaA"/>
    <property type="match status" value="1"/>
</dbReference>
<dbReference type="FunFam" id="1.10.8.60:FF:000003">
    <property type="entry name" value="Chromosomal replication initiator protein DnaA"/>
    <property type="match status" value="1"/>
</dbReference>
<dbReference type="FunFam" id="3.30.300.180:FF:000001">
    <property type="entry name" value="Chromosomal replication initiator protein DnaA"/>
    <property type="match status" value="1"/>
</dbReference>
<dbReference type="FunFam" id="3.40.50.300:FF:000103">
    <property type="entry name" value="Chromosomal replication initiator protein DnaA"/>
    <property type="match status" value="1"/>
</dbReference>
<dbReference type="Gene3D" id="1.10.1750.10">
    <property type="match status" value="1"/>
</dbReference>
<dbReference type="Gene3D" id="1.10.8.60">
    <property type="match status" value="1"/>
</dbReference>
<dbReference type="Gene3D" id="3.30.300.180">
    <property type="match status" value="1"/>
</dbReference>
<dbReference type="Gene3D" id="3.40.50.300">
    <property type="entry name" value="P-loop containing nucleotide triphosphate hydrolases"/>
    <property type="match status" value="1"/>
</dbReference>
<dbReference type="HAMAP" id="MF_00377">
    <property type="entry name" value="DnaA_bact"/>
    <property type="match status" value="1"/>
</dbReference>
<dbReference type="InterPro" id="IPR003593">
    <property type="entry name" value="AAA+_ATPase"/>
</dbReference>
<dbReference type="InterPro" id="IPR001957">
    <property type="entry name" value="Chromosome_initiator_DnaA"/>
</dbReference>
<dbReference type="InterPro" id="IPR020591">
    <property type="entry name" value="Chromosome_initiator_DnaA-like"/>
</dbReference>
<dbReference type="InterPro" id="IPR018312">
    <property type="entry name" value="Chromosome_initiator_DnaA_CS"/>
</dbReference>
<dbReference type="InterPro" id="IPR013159">
    <property type="entry name" value="DnaA_C"/>
</dbReference>
<dbReference type="InterPro" id="IPR013317">
    <property type="entry name" value="DnaA_dom"/>
</dbReference>
<dbReference type="InterPro" id="IPR024633">
    <property type="entry name" value="DnaA_N_dom"/>
</dbReference>
<dbReference type="InterPro" id="IPR038454">
    <property type="entry name" value="DnaA_N_sf"/>
</dbReference>
<dbReference type="InterPro" id="IPR055199">
    <property type="entry name" value="Hda_lid"/>
</dbReference>
<dbReference type="InterPro" id="IPR027417">
    <property type="entry name" value="P-loop_NTPase"/>
</dbReference>
<dbReference type="InterPro" id="IPR010921">
    <property type="entry name" value="Trp_repressor/repl_initiator"/>
</dbReference>
<dbReference type="NCBIfam" id="TIGR00362">
    <property type="entry name" value="DnaA"/>
    <property type="match status" value="1"/>
</dbReference>
<dbReference type="PANTHER" id="PTHR30050">
    <property type="entry name" value="CHROMOSOMAL REPLICATION INITIATOR PROTEIN DNAA"/>
    <property type="match status" value="1"/>
</dbReference>
<dbReference type="PANTHER" id="PTHR30050:SF2">
    <property type="entry name" value="CHROMOSOMAL REPLICATION INITIATOR PROTEIN DNAA"/>
    <property type="match status" value="1"/>
</dbReference>
<dbReference type="Pfam" id="PF00308">
    <property type="entry name" value="Bac_DnaA"/>
    <property type="match status" value="1"/>
</dbReference>
<dbReference type="Pfam" id="PF08299">
    <property type="entry name" value="Bac_DnaA_C"/>
    <property type="match status" value="1"/>
</dbReference>
<dbReference type="Pfam" id="PF11638">
    <property type="entry name" value="DnaA_N"/>
    <property type="match status" value="1"/>
</dbReference>
<dbReference type="Pfam" id="PF22688">
    <property type="entry name" value="Hda_lid"/>
    <property type="match status" value="1"/>
</dbReference>
<dbReference type="PRINTS" id="PR00051">
    <property type="entry name" value="DNAA"/>
</dbReference>
<dbReference type="SMART" id="SM00382">
    <property type="entry name" value="AAA"/>
    <property type="match status" value="1"/>
</dbReference>
<dbReference type="SMART" id="SM00760">
    <property type="entry name" value="Bac_DnaA_C"/>
    <property type="match status" value="1"/>
</dbReference>
<dbReference type="SUPFAM" id="SSF52540">
    <property type="entry name" value="P-loop containing nucleoside triphosphate hydrolases"/>
    <property type="match status" value="1"/>
</dbReference>
<dbReference type="SUPFAM" id="SSF48295">
    <property type="entry name" value="TrpR-like"/>
    <property type="match status" value="1"/>
</dbReference>
<dbReference type="PROSITE" id="PS01008">
    <property type="entry name" value="DNAA"/>
    <property type="match status" value="1"/>
</dbReference>
<keyword id="KW-0067">ATP-binding</keyword>
<keyword id="KW-0963">Cytoplasm</keyword>
<keyword id="KW-0235">DNA replication</keyword>
<keyword id="KW-0238">DNA-binding</keyword>
<keyword id="KW-0446">Lipid-binding</keyword>
<keyword id="KW-0547">Nucleotide-binding</keyword>
<sequence length="466" mass="52974">MSLSLWQHCLARLQDELPATEFSMWIRPLQAELSDNTLALYAPNRFVLDWVREKYINNINALLVDFCGSDVPSLRFEVGNKPVSARTTESVPKTVTHPAVNSTPTNSQPVRPSWDNQPQSQLPELNYRSNVNPKHKFDNFVEGKSNQLARAAARQVADNPGGAYNPLFLYGGTGLGKTHLLHAVGNSIMERKANAKVVYMHSERFVQDMVKALQNNAIEDFKRYYRSVDALLIDDIQFFANKERSQEEFFHTFNALLEGNQQIILTSDRYPKEINGVEDRLKSRFGWGLTVAIEPPELETRVAILMKKADENQIQLPDEVAFFIAKRLRSNVRELEGALNRVIANANFTGRAITIDFVREALRDLLALQEKLVTIDNIQKTVAEYYKIKVADLLSKRRSRSVARPRQMAMALAKELTNHSLPEIGDAFGGRDHTTVLHACRKIEQLREESHDIKEDFSNLIRTLSS</sequence>
<organism>
    <name type="scientific">Proteus mirabilis</name>
    <dbReference type="NCBI Taxonomy" id="584"/>
    <lineage>
        <taxon>Bacteria</taxon>
        <taxon>Pseudomonadati</taxon>
        <taxon>Pseudomonadota</taxon>
        <taxon>Gammaproteobacteria</taxon>
        <taxon>Enterobacterales</taxon>
        <taxon>Morganellaceae</taxon>
        <taxon>Proteus</taxon>
    </lineage>
</organism>
<feature type="chain" id="PRO_0000114234" description="Chromosomal replication initiator protein DnaA">
    <location>
        <begin position="1"/>
        <end position="466"/>
    </location>
</feature>
<feature type="region of interest" description="Domain I, interacts with DnaA modulators" evidence="1">
    <location>
        <begin position="1"/>
        <end position="85"/>
    </location>
</feature>
<feature type="region of interest" description="Disordered" evidence="2">
    <location>
        <begin position="82"/>
        <end position="122"/>
    </location>
</feature>
<feature type="region of interest" description="Domain II" evidence="1">
    <location>
        <begin position="85"/>
        <end position="129"/>
    </location>
</feature>
<feature type="region of interest" description="Domain III, AAA+ region" evidence="1">
    <location>
        <begin position="130"/>
        <end position="346"/>
    </location>
</feature>
<feature type="region of interest" description="Domain IV, binds dsDNA" evidence="1">
    <location>
        <begin position="347"/>
        <end position="466"/>
    </location>
</feature>
<feature type="compositionally biased region" description="Polar residues" evidence="2">
    <location>
        <begin position="85"/>
        <end position="122"/>
    </location>
</feature>
<feature type="binding site" evidence="1">
    <location>
        <position position="174"/>
    </location>
    <ligand>
        <name>ATP</name>
        <dbReference type="ChEBI" id="CHEBI:30616"/>
    </ligand>
</feature>
<feature type="binding site" evidence="1">
    <location>
        <position position="176"/>
    </location>
    <ligand>
        <name>ATP</name>
        <dbReference type="ChEBI" id="CHEBI:30616"/>
    </ligand>
</feature>
<feature type="binding site" evidence="1">
    <location>
        <position position="177"/>
    </location>
    <ligand>
        <name>ATP</name>
        <dbReference type="ChEBI" id="CHEBI:30616"/>
    </ligand>
</feature>
<feature type="binding site" evidence="1">
    <location>
        <position position="178"/>
    </location>
    <ligand>
        <name>ATP</name>
        <dbReference type="ChEBI" id="CHEBI:30616"/>
    </ligand>
</feature>
<protein>
    <recommendedName>
        <fullName evidence="1">Chromosomal replication initiator protein DnaA</fullName>
    </recommendedName>
</protein>
<proteinExistence type="inferred from homology"/>
<gene>
    <name evidence="1" type="primary">dnaA</name>
</gene>
<evidence type="ECO:0000255" key="1">
    <source>
        <dbReference type="HAMAP-Rule" id="MF_00377"/>
    </source>
</evidence>
<evidence type="ECO:0000256" key="2">
    <source>
        <dbReference type="SAM" id="MobiDB-lite"/>
    </source>
</evidence>
<comment type="function">
    <text evidence="1">Plays an essential role in the initiation and regulation of chromosomal replication. ATP-DnaA binds to the origin of replication (oriC) to initiate formation of the DNA replication initiation complex once per cell cycle. Binds the DnaA box (a 9 base pair repeat at the origin) and separates the double-stranded (ds)DNA. Forms a right-handed helical filament on oriC DNA; dsDNA binds to the exterior of the filament while single-stranded (ss)DNA is stabiized in the filament's interior. The ATP-DnaA-oriC complex binds and stabilizes one strand of the AT-rich DNA unwinding element (DUE), permitting loading of DNA polymerase. After initiation quickly degrades to an ADP-DnaA complex that is not apt for DNA replication. Binds acidic phospholipids.</text>
</comment>
<comment type="subunit">
    <text evidence="1">Oligomerizes as a right-handed, spiral filament on DNA at oriC.</text>
</comment>
<comment type="subcellular location">
    <subcellularLocation>
        <location evidence="1">Cytoplasm</location>
    </subcellularLocation>
</comment>
<comment type="domain">
    <text evidence="1">Domain I is involved in oligomerization and binding regulators, domain II is flexibile and of varying length in different bacteria, domain III forms the AAA+ region, while domain IV binds dsDNA.</text>
</comment>
<comment type="similarity">
    <text evidence="1">Belongs to the DnaA family.</text>
</comment>